<gene>
    <name type="primary">ampG</name>
    <name type="ordered locus">Z0536</name>
    <name type="ordered locus">ECs0487</name>
</gene>
<protein>
    <recommendedName>
        <fullName evidence="1">Anhydromuropeptide permease</fullName>
    </recommendedName>
    <alternativeName>
        <fullName evidence="1">AmpG permease</fullName>
    </alternativeName>
    <alternativeName>
        <fullName evidence="1">Muropeptide:H(+) symporter</fullName>
    </alternativeName>
</protein>
<sequence length="491" mass="53245">MSSQYLRIFQQPRSAILLILGFASGLPLALTSGTLQAWMTVENIDLKTIGFFSLVGQAYVFKFLWSPLMDRYTPPFFGRRRGWLLATQILLLVAIAAMGFLEPGTQLRWMAALAVVIAFCSASQDIVFDAWKTDVLPAEERGAGAAISVLGYRLGMLVSGGLALWLADKWLGWQGMYWLMAALLIPCIIATLLAPEPTDTIPVPKTLEQAVVAPLRDFFGRNNAWLILLLIVLYKLGDAFAMSLTTTFLIRGVGFDAGEVGVVNKTLGLLATIVGALYGGILMQRLSLFRALLIFGILQGASNAGYWLLSITDKHLYSMGAAVFFENLCGGMGTSAFVALLMTLCNKSFSATQFALLSALSAVGRVYVGPVAGWFVEAHGWSTFYLFSVAAAVPGLILLLVCRQTLEYTRVNDNFISRTAYPAGYAFAMWTLAAGVSLLAVWLLLLTMDALDLTHFSFLPALLEVGVLVALSGVVLGGLLDYLALRKTHLT</sequence>
<reference key="1">
    <citation type="journal article" date="2001" name="Nature">
        <title>Genome sequence of enterohaemorrhagic Escherichia coli O157:H7.</title>
        <authorList>
            <person name="Perna N.T."/>
            <person name="Plunkett G. III"/>
            <person name="Burland V."/>
            <person name="Mau B."/>
            <person name="Glasner J.D."/>
            <person name="Rose D.J."/>
            <person name="Mayhew G.F."/>
            <person name="Evans P.S."/>
            <person name="Gregor J."/>
            <person name="Kirkpatrick H.A."/>
            <person name="Posfai G."/>
            <person name="Hackett J."/>
            <person name="Klink S."/>
            <person name="Boutin A."/>
            <person name="Shao Y."/>
            <person name="Miller L."/>
            <person name="Grotbeck E.J."/>
            <person name="Davis N.W."/>
            <person name="Lim A."/>
            <person name="Dimalanta E.T."/>
            <person name="Potamousis K."/>
            <person name="Apodaca J."/>
            <person name="Anantharaman T.S."/>
            <person name="Lin J."/>
            <person name="Yen G."/>
            <person name="Schwartz D.C."/>
            <person name="Welch R.A."/>
            <person name="Blattner F.R."/>
        </authorList>
    </citation>
    <scope>NUCLEOTIDE SEQUENCE [LARGE SCALE GENOMIC DNA]</scope>
    <source>
        <strain>O157:H7 / EDL933 / ATCC 700927 / EHEC</strain>
    </source>
</reference>
<reference key="2">
    <citation type="journal article" date="2001" name="DNA Res.">
        <title>Complete genome sequence of enterohemorrhagic Escherichia coli O157:H7 and genomic comparison with a laboratory strain K-12.</title>
        <authorList>
            <person name="Hayashi T."/>
            <person name="Makino K."/>
            <person name="Ohnishi M."/>
            <person name="Kurokawa K."/>
            <person name="Ishii K."/>
            <person name="Yokoyama K."/>
            <person name="Han C.-G."/>
            <person name="Ohtsubo E."/>
            <person name="Nakayama K."/>
            <person name="Murata T."/>
            <person name="Tanaka M."/>
            <person name="Tobe T."/>
            <person name="Iida T."/>
            <person name="Takami H."/>
            <person name="Honda T."/>
            <person name="Sasakawa C."/>
            <person name="Ogasawara N."/>
            <person name="Yasunaga T."/>
            <person name="Kuhara S."/>
            <person name="Shiba T."/>
            <person name="Hattori M."/>
            <person name="Shinagawa H."/>
        </authorList>
    </citation>
    <scope>NUCLEOTIDE SEQUENCE [LARGE SCALE GENOMIC DNA]</scope>
    <source>
        <strain>O157:H7 / Sakai / RIMD 0509952 / EHEC</strain>
    </source>
</reference>
<organism>
    <name type="scientific">Escherichia coli O157:H7</name>
    <dbReference type="NCBI Taxonomy" id="83334"/>
    <lineage>
        <taxon>Bacteria</taxon>
        <taxon>Pseudomonadati</taxon>
        <taxon>Pseudomonadota</taxon>
        <taxon>Gammaproteobacteria</taxon>
        <taxon>Enterobacterales</taxon>
        <taxon>Enterobacteriaceae</taxon>
        <taxon>Escherichia</taxon>
    </lineage>
</organism>
<evidence type="ECO:0000250" key="1">
    <source>
        <dbReference type="UniProtKB" id="P0AE16"/>
    </source>
</evidence>
<evidence type="ECO:0000305" key="2"/>
<proteinExistence type="inferred from homology"/>
<keyword id="KW-0997">Cell inner membrane</keyword>
<keyword id="KW-1003">Cell membrane</keyword>
<keyword id="KW-0961">Cell wall biogenesis/degradation</keyword>
<keyword id="KW-0472">Membrane</keyword>
<keyword id="KW-1185">Reference proteome</keyword>
<keyword id="KW-0769">Symport</keyword>
<keyword id="KW-0812">Transmembrane</keyword>
<keyword id="KW-1133">Transmembrane helix</keyword>
<keyword id="KW-0813">Transport</keyword>
<dbReference type="EMBL" id="AE005174">
    <property type="protein sequence ID" value="AAG54783.1"/>
    <property type="molecule type" value="Genomic_DNA"/>
</dbReference>
<dbReference type="EMBL" id="BA000007">
    <property type="protein sequence ID" value="BAB33910.1"/>
    <property type="molecule type" value="Genomic_DNA"/>
</dbReference>
<dbReference type="PIR" id="C85540">
    <property type="entry name" value="C85540"/>
</dbReference>
<dbReference type="PIR" id="G90689">
    <property type="entry name" value="G90689"/>
</dbReference>
<dbReference type="RefSeq" id="NP_308514.1">
    <property type="nucleotide sequence ID" value="NC_002695.1"/>
</dbReference>
<dbReference type="RefSeq" id="WP_000098429.1">
    <property type="nucleotide sequence ID" value="NZ_VOAI01000005.1"/>
</dbReference>
<dbReference type="SMR" id="P0AE17"/>
<dbReference type="STRING" id="155864.Z0536"/>
<dbReference type="GeneID" id="75170451"/>
<dbReference type="GeneID" id="914589"/>
<dbReference type="KEGG" id="ece:Z0536"/>
<dbReference type="KEGG" id="ecs:ECs_0487"/>
<dbReference type="PATRIC" id="fig|386585.9.peg.588"/>
<dbReference type="eggNOG" id="COG2223">
    <property type="taxonomic scope" value="Bacteria"/>
</dbReference>
<dbReference type="HOGENOM" id="CLU_029352_1_0_6"/>
<dbReference type="OMA" id="PFYVDMG"/>
<dbReference type="Proteomes" id="UP000000558">
    <property type="component" value="Chromosome"/>
</dbReference>
<dbReference type="Proteomes" id="UP000002519">
    <property type="component" value="Chromosome"/>
</dbReference>
<dbReference type="GO" id="GO:0005886">
    <property type="term" value="C:plasma membrane"/>
    <property type="evidence" value="ECO:0007669"/>
    <property type="project" value="UniProtKB-SubCell"/>
</dbReference>
<dbReference type="GO" id="GO:0015293">
    <property type="term" value="F:symporter activity"/>
    <property type="evidence" value="ECO:0007669"/>
    <property type="project" value="UniProtKB-KW"/>
</dbReference>
<dbReference type="GO" id="GO:0071555">
    <property type="term" value="P:cell wall organization"/>
    <property type="evidence" value="ECO:0007669"/>
    <property type="project" value="UniProtKB-KW"/>
</dbReference>
<dbReference type="CDD" id="cd17486">
    <property type="entry name" value="MFS_AmpG_like"/>
    <property type="match status" value="1"/>
</dbReference>
<dbReference type="FunFam" id="1.20.1250.20:FF:000072">
    <property type="entry name" value="Muropeptide transporter AmpG"/>
    <property type="match status" value="1"/>
</dbReference>
<dbReference type="FunFam" id="1.20.1250.20:FF:000080">
    <property type="entry name" value="Muropeptide transporter AmpG"/>
    <property type="match status" value="1"/>
</dbReference>
<dbReference type="Gene3D" id="1.20.1250.20">
    <property type="entry name" value="MFS general substrate transporter like domains"/>
    <property type="match status" value="2"/>
</dbReference>
<dbReference type="InterPro" id="IPR004752">
    <property type="entry name" value="AmpG_permease/AT-1"/>
</dbReference>
<dbReference type="InterPro" id="IPR011701">
    <property type="entry name" value="MFS"/>
</dbReference>
<dbReference type="InterPro" id="IPR020846">
    <property type="entry name" value="MFS_dom"/>
</dbReference>
<dbReference type="InterPro" id="IPR036259">
    <property type="entry name" value="MFS_trans_sf"/>
</dbReference>
<dbReference type="NCBIfam" id="TIGR00901">
    <property type="entry name" value="2A0125"/>
    <property type="match status" value="1"/>
</dbReference>
<dbReference type="NCBIfam" id="NF008238">
    <property type="entry name" value="PRK11010.1"/>
    <property type="match status" value="1"/>
</dbReference>
<dbReference type="NCBIfam" id="NF008867">
    <property type="entry name" value="PRK11902.1"/>
    <property type="match status" value="1"/>
</dbReference>
<dbReference type="PANTHER" id="PTHR12778:SF10">
    <property type="entry name" value="MAJOR FACILITATOR SUPERFAMILY DOMAIN-CONTAINING PROTEIN 3"/>
    <property type="match status" value="1"/>
</dbReference>
<dbReference type="PANTHER" id="PTHR12778">
    <property type="entry name" value="SOLUTE CARRIER FAMILY 33 ACETYL-COA TRANSPORTER -RELATED"/>
    <property type="match status" value="1"/>
</dbReference>
<dbReference type="Pfam" id="PF07690">
    <property type="entry name" value="MFS_1"/>
    <property type="match status" value="1"/>
</dbReference>
<dbReference type="SUPFAM" id="SSF103473">
    <property type="entry name" value="MFS general substrate transporter"/>
    <property type="match status" value="1"/>
</dbReference>
<dbReference type="PROSITE" id="PS50850">
    <property type="entry name" value="MFS"/>
    <property type="match status" value="1"/>
</dbReference>
<comment type="function">
    <text evidence="1">Permease involved in cell wall peptidoglycan recycling. Transports, from the periplasm into the cytoplasm, the disaccharide N-acetylglucosaminyl-beta-1,4-anhydro-N-acetylmuramic acid (GlcNAc-anhMurNAc) and GlcNAc-anhMurNAc-peptides. Transport is dependent on the proton motive force.</text>
</comment>
<comment type="subcellular location">
    <subcellularLocation>
        <location evidence="1">Cell inner membrane</location>
        <topology evidence="1">Multi-pass membrane protein</topology>
    </subcellularLocation>
</comment>
<comment type="similarity">
    <text evidence="2">Belongs to the major facilitator superfamily.</text>
</comment>
<accession>P0AE17</accession>
<accession>P36670</accession>
<name>AMPG_ECO57</name>
<feature type="chain" id="PRO_0000084831" description="Anhydromuropeptide permease">
    <location>
        <begin position="1"/>
        <end position="491"/>
    </location>
</feature>
<feature type="topological domain" description="Cytoplasmic" evidence="1">
    <location>
        <begin position="1"/>
        <end position="11"/>
    </location>
</feature>
<feature type="transmembrane region" description="Helical" evidence="1">
    <location>
        <begin position="12"/>
        <end position="32"/>
    </location>
</feature>
<feature type="topological domain" description="Periplasmic" evidence="1">
    <location>
        <begin position="33"/>
        <end position="47"/>
    </location>
</feature>
<feature type="transmembrane region" description="Helical" evidence="1">
    <location>
        <begin position="48"/>
        <end position="61"/>
    </location>
</feature>
<feature type="topological domain" description="Cytoplasmic" evidence="1">
    <location>
        <begin position="62"/>
        <end position="81"/>
    </location>
</feature>
<feature type="transmembrane region" description="Helical" evidence="1">
    <location>
        <begin position="82"/>
        <end position="105"/>
    </location>
</feature>
<feature type="topological domain" description="Periplasmic" evidence="1">
    <location>
        <position position="106"/>
    </location>
</feature>
<feature type="transmembrane region" description="Helical" evidence="1">
    <location>
        <begin position="107"/>
        <end position="124"/>
    </location>
</feature>
<feature type="topological domain" description="Cytoplasmic" evidence="1">
    <location>
        <begin position="125"/>
        <end position="221"/>
    </location>
</feature>
<feature type="transmembrane region" description="Helical" evidence="1">
    <location>
        <begin position="222"/>
        <end position="240"/>
    </location>
</feature>
<feature type="topological domain" description="Periplasmic" evidence="1">
    <location>
        <begin position="241"/>
        <end position="264"/>
    </location>
</feature>
<feature type="transmembrane region" description="Helical" evidence="1">
    <location>
        <begin position="265"/>
        <end position="284"/>
    </location>
</feature>
<feature type="topological domain" description="Cytoplasmic" evidence="1">
    <location>
        <begin position="285"/>
        <end position="287"/>
    </location>
</feature>
<feature type="transmembrane region" description="Helical" evidence="1">
    <location>
        <begin position="288"/>
        <end position="303"/>
    </location>
</feature>
<feature type="topological domain" description="Periplasmic" evidence="1">
    <location>
        <begin position="304"/>
        <end position="327"/>
    </location>
</feature>
<feature type="transmembrane region" description="Helical" evidence="1">
    <location>
        <begin position="328"/>
        <end position="346"/>
    </location>
</feature>
<feature type="topological domain" description="Cytoplasmic" evidence="1">
    <location>
        <begin position="347"/>
        <end position="421"/>
    </location>
</feature>
<feature type="transmembrane region" description="Helical" evidence="1">
    <location>
        <begin position="422"/>
        <end position="453"/>
    </location>
</feature>
<feature type="topological domain" description="Periplasmic" evidence="1">
    <location>
        <begin position="454"/>
        <end position="457"/>
    </location>
</feature>
<feature type="transmembrane region" description="Helical" evidence="1">
    <location>
        <begin position="458"/>
        <end position="485"/>
    </location>
</feature>
<feature type="topological domain" description="Cytoplasmic" evidence="1">
    <location>
        <begin position="486"/>
        <end position="491"/>
    </location>
</feature>